<dbReference type="EC" id="2.7.7.13"/>
<dbReference type="EMBL" id="AF234177">
    <property type="protein sequence ID" value="AAF60300.1"/>
    <property type="molecule type" value="Genomic_DNA"/>
</dbReference>
<dbReference type="SMR" id="Q9P8N0"/>
<dbReference type="PhylomeDB" id="Q9P8N0"/>
<dbReference type="UniPathway" id="UPA00126">
    <property type="reaction ID" value="UER00930"/>
</dbReference>
<dbReference type="GO" id="GO:0005737">
    <property type="term" value="C:cytoplasm"/>
    <property type="evidence" value="ECO:0007669"/>
    <property type="project" value="UniProtKB-SubCell"/>
</dbReference>
<dbReference type="GO" id="GO:0005525">
    <property type="term" value="F:GTP binding"/>
    <property type="evidence" value="ECO:0007669"/>
    <property type="project" value="UniProtKB-KW"/>
</dbReference>
<dbReference type="GO" id="GO:0004475">
    <property type="term" value="F:mannose-1-phosphate guanylyltransferase (GTP) activity"/>
    <property type="evidence" value="ECO:0007669"/>
    <property type="project" value="UniProtKB-EC"/>
</dbReference>
<dbReference type="GO" id="GO:0009298">
    <property type="term" value="P:GDP-mannose biosynthetic process"/>
    <property type="evidence" value="ECO:0007669"/>
    <property type="project" value="UniProtKB-UniPathway"/>
</dbReference>
<dbReference type="CDD" id="cd06425">
    <property type="entry name" value="M1P_guanylylT_B_like_N"/>
    <property type="match status" value="1"/>
</dbReference>
<dbReference type="FunFam" id="2.160.10.10:FF:000017">
    <property type="entry name" value="Mannose-1-phosphate guanyltransferase"/>
    <property type="match status" value="1"/>
</dbReference>
<dbReference type="FunFam" id="3.90.550.10:FF:000013">
    <property type="entry name" value="mannose-1-phosphate guanyltransferase beta"/>
    <property type="match status" value="1"/>
</dbReference>
<dbReference type="Gene3D" id="2.160.10.10">
    <property type="entry name" value="Hexapeptide repeat proteins"/>
    <property type="match status" value="1"/>
</dbReference>
<dbReference type="Gene3D" id="3.90.550.10">
    <property type="entry name" value="Spore Coat Polysaccharide Biosynthesis Protein SpsA, Chain A"/>
    <property type="match status" value="1"/>
</dbReference>
<dbReference type="InterPro" id="IPR056729">
    <property type="entry name" value="GMPPB_C"/>
</dbReference>
<dbReference type="InterPro" id="IPR045233">
    <property type="entry name" value="GMPPB_N"/>
</dbReference>
<dbReference type="InterPro" id="IPR050486">
    <property type="entry name" value="Mannose-1P_guanyltransferase"/>
</dbReference>
<dbReference type="InterPro" id="IPR005835">
    <property type="entry name" value="NTP_transferase_dom"/>
</dbReference>
<dbReference type="InterPro" id="IPR029044">
    <property type="entry name" value="Nucleotide-diphossugar_trans"/>
</dbReference>
<dbReference type="PANTHER" id="PTHR22572">
    <property type="entry name" value="SUGAR-1-PHOSPHATE GUANYL TRANSFERASE"/>
    <property type="match status" value="1"/>
</dbReference>
<dbReference type="Pfam" id="PF25087">
    <property type="entry name" value="GMPPB_C"/>
    <property type="match status" value="1"/>
</dbReference>
<dbReference type="Pfam" id="PF00483">
    <property type="entry name" value="NTP_transferase"/>
    <property type="match status" value="1"/>
</dbReference>
<dbReference type="SUPFAM" id="SSF53448">
    <property type="entry name" value="Nucleotide-diphospho-sugar transferases"/>
    <property type="match status" value="1"/>
</dbReference>
<dbReference type="PROSITE" id="PS00101">
    <property type="entry name" value="HEXAPEP_TRANSFERASES"/>
    <property type="match status" value="1"/>
</dbReference>
<proteinExistence type="inferred from homology"/>
<name>MPG1_PICAN</name>
<keyword id="KW-0131">Cell cycle</keyword>
<keyword id="KW-0963">Cytoplasm</keyword>
<keyword id="KW-0342">GTP-binding</keyword>
<keyword id="KW-0547">Nucleotide-binding</keyword>
<keyword id="KW-0548">Nucleotidyltransferase</keyword>
<keyword id="KW-0808">Transferase</keyword>
<organism>
    <name type="scientific">Pichia angusta</name>
    <name type="common">Yeast</name>
    <name type="synonym">Hansenula polymorpha</name>
    <dbReference type="NCBI Taxonomy" id="870730"/>
    <lineage>
        <taxon>Eukaryota</taxon>
        <taxon>Fungi</taxon>
        <taxon>Dikarya</taxon>
        <taxon>Ascomycota</taxon>
        <taxon>Saccharomycotina</taxon>
        <taxon>Pichiomycetes</taxon>
        <taxon>Pichiales</taxon>
        <taxon>Pichiaceae</taxon>
        <taxon>Ogataea</taxon>
    </lineage>
</organism>
<sequence length="364" mass="40065">MKGLILVGGYGTRLRPLTLSLPKPLVEFGNRPMILHQIEALANAGCTDIVLAVNYKPEVMVGALKQYEKEYGVSITFSVEEEPLGTAGPLKLAEKILKKDNTPIFVLNSDVICEYPLRDLLEFHTAHGGEATIVATKVDEPSKYGVIVHDRDVPNLIERFVEKPVEFVGNRINAGIYVLNPSVIDLIEMRPTSIEHETFPILVEQKKLYSFDLPGYWMDVGQPKDFLSGMCLYLSALTKKNSNLLTSTSEEYVNGGNVLIDPSAKIGKGCKIGPNVVIGPNCIIGDGVRIQRSTILKNSQIKDHAWVKSTIVGWNSTVGKWARLEGVTVLGEDVTVKDEVYVNGGKVLPHKSIKDNVETPQIIM</sequence>
<comment type="function">
    <text evidence="2">Involved in cell wall synthesis where it is required for glycosylation. Involved in cell cycle progression through cell-size checkpoint.</text>
</comment>
<comment type="catalytic activity">
    <reaction>
        <text>alpha-D-mannose 1-phosphate + GTP + H(+) = GDP-alpha-D-mannose + diphosphate</text>
        <dbReference type="Rhea" id="RHEA:15229"/>
        <dbReference type="ChEBI" id="CHEBI:15378"/>
        <dbReference type="ChEBI" id="CHEBI:33019"/>
        <dbReference type="ChEBI" id="CHEBI:37565"/>
        <dbReference type="ChEBI" id="CHEBI:57527"/>
        <dbReference type="ChEBI" id="CHEBI:58409"/>
        <dbReference type="EC" id="2.7.7.13"/>
    </reaction>
</comment>
<comment type="pathway">
    <text>Nucleotide-sugar biosynthesis; GDP-alpha-D-mannose biosynthesis; GDP-alpha-D-mannose from alpha-D-mannose 1-phosphate (GTP route): step 1/1.</text>
</comment>
<comment type="subcellular location">
    <subcellularLocation>
        <location evidence="1">Cytoplasm</location>
    </subcellularLocation>
</comment>
<comment type="similarity">
    <text evidence="3">Belongs to the transferase hexapeptide repeat family.</text>
</comment>
<evidence type="ECO:0000250" key="1"/>
<evidence type="ECO:0000269" key="2">
    <source>
    </source>
</evidence>
<evidence type="ECO:0000305" key="3"/>
<feature type="chain" id="PRO_0000238492" description="Mannose-1-phosphate guanyltransferase">
    <location>
        <begin position="1"/>
        <end position="364"/>
    </location>
</feature>
<reference key="1">
    <citation type="journal article" date="2001" name="Yeast">
        <title>Mutation of the homologue of GDP-mannose pyrophosphorylase alters cell wall structure, protein glycosylation and secretion in Hansenula polymorpha.</title>
        <authorList>
            <person name="Agaphonov M.O."/>
            <person name="Packeiser A.N."/>
            <person name="Chechenova M.B."/>
            <person name="Choi E.-S."/>
            <person name="Ter-Avanesyan M.D."/>
        </authorList>
    </citation>
    <scope>NUCLEOTIDE SEQUENCE [GENOMIC DNA]</scope>
    <scope>FUNCTION</scope>
    <source>
        <strain>ATCC 34438 / CBS 4732 / DSM 70277 / JCM 3621 / NBRC 1476 / NRRL Y-5445</strain>
    </source>
</reference>
<protein>
    <recommendedName>
        <fullName>Mannose-1-phosphate guanyltransferase</fullName>
        <ecNumber>2.7.7.13</ecNumber>
    </recommendedName>
    <alternativeName>
        <fullName>GDP-mannose pyrophosphorylase</fullName>
    </alternativeName>
    <alternativeName>
        <fullName>GTP-mannose-1-phosphate guanylyltransferase</fullName>
    </alternativeName>
</protein>
<gene>
    <name type="primary">MPG1</name>
    <name type="synonym">OPU24</name>
</gene>
<accession>Q9P8N0</accession>